<protein>
    <recommendedName>
        <fullName>Myb-related protein A</fullName>
        <shortName>A-Myb</shortName>
        <shortName>xAMYB</shortName>
    </recommendedName>
    <alternativeName>
        <fullName>Myb-like protein 1</fullName>
    </alternativeName>
    <alternativeName>
        <fullName>Myb-related protein 2</fullName>
    </alternativeName>
    <alternativeName>
        <fullName>XMYB2</fullName>
    </alternativeName>
</protein>
<sequence>MAGRARSEDEEEDGQFTEHDYDVSLQKGPKKPWSKLRWTKDEDDKVKKLVEKHGEDWGVVARHFINRSEVQCQHRWHKVLSPELVKGPWTKEEDQRVIELVHKYGPKKWSIIAKHLKGRIGKQCRERWHNHLNPDVKKSSWTEEEDRIIYSAHKRMGNRWAEIAKLLPGRTDNSIKNHWNSTMKRKVEQEGYLQDLMNCDRPSKLQAKSCAAPNHLQAQNQFYIPVQTQIPRYSSLSHDDNCIEIQNSFSFIQQPFVDADDPEKEKRIKELELLLMSAENEVRRKRVPSGSSLTWSESYHMGESMSNTMSHLEEQTHDFYSLDEIPNTSGQQSVEDKILAPEANIVLQPLETIPEFSETLELIDVDTVDWNNIESFELPFTASPAKHTPMKWIHEISPECALNSCLVQADGRGSASRVLSSSPAMPKFYSPPTILRKKKIHPDLSLTPEVRDASNVVLKGTPVKTRQYSPLQLFRSGNVQNHLNLDNLPLTSTPVCGQKISATPLQRQITPKKDKENAGFRTPTIRRSLMAVTPRTPTPFKNALAAQEKKYGPLRTVMQPLIFVEEDIMEVLKKETEKDVFIKEEKESDCKPMKQEHVSTVRKVRKSLILDSCDKEELGADFLAPDEVSQSQNGNTLPTSFLMIPLGERQDQKCDENTDTRKGSVMQRKNYIPATRNVKLQSSVQPLCEWEAVVYGKTEDQLIMTEQARRYLDTYKPTSSSGLRHLIL</sequence>
<feature type="chain" id="PRO_0000197057" description="Myb-related protein A">
    <location>
        <begin position="1"/>
        <end position="728"/>
    </location>
</feature>
<feature type="domain" description="HTH myb-type 1" evidence="4">
    <location>
        <begin position="30"/>
        <end position="80"/>
    </location>
</feature>
<feature type="domain" description="HTH myb-type 2" evidence="4">
    <location>
        <begin position="81"/>
        <end position="136"/>
    </location>
</feature>
<feature type="domain" description="HTH myb-type 3" evidence="4">
    <location>
        <begin position="137"/>
        <end position="187"/>
    </location>
</feature>
<feature type="DNA-binding region" description="H-T-H motif" evidence="4">
    <location>
        <begin position="57"/>
        <end position="80"/>
    </location>
</feature>
<feature type="DNA-binding region" description="H-T-H motif" evidence="4">
    <location>
        <begin position="109"/>
        <end position="132"/>
    </location>
</feature>
<feature type="DNA-binding region" description="H-T-H motif" evidence="4">
    <location>
        <begin position="160"/>
        <end position="183"/>
    </location>
</feature>
<feature type="region of interest" description="Disordered" evidence="5">
    <location>
        <begin position="1"/>
        <end position="31"/>
    </location>
</feature>
<feature type="region of interest" description="Transcriptional activation domain" evidence="1">
    <location>
        <begin position="230"/>
        <end position="293"/>
    </location>
</feature>
<feature type="region of interest" description="Negative regulatory domain" evidence="1">
    <location>
        <begin position="296"/>
        <end position="534"/>
    </location>
</feature>
<proteinExistence type="evidence at transcript level"/>
<keyword id="KW-0010">Activator</keyword>
<keyword id="KW-0221">Differentiation</keyword>
<keyword id="KW-0238">DNA-binding</keyword>
<keyword id="KW-0539">Nucleus</keyword>
<keyword id="KW-1185">Reference proteome</keyword>
<keyword id="KW-0677">Repeat</keyword>
<keyword id="KW-0744">Spermatogenesis</keyword>
<keyword id="KW-0804">Transcription</keyword>
<keyword id="KW-0805">Transcription regulation</keyword>
<name>MYBA_XENLA</name>
<accession>Q05935</accession>
<dbReference type="EMBL" id="X72620">
    <property type="protein sequence ID" value="CAA51196.1"/>
    <property type="molecule type" value="mRNA"/>
</dbReference>
<dbReference type="EMBL" id="M75871">
    <property type="protein sequence ID" value="AAA49904.1"/>
    <property type="molecule type" value="mRNA"/>
</dbReference>
<dbReference type="PIR" id="S36095">
    <property type="entry name" value="S36095"/>
</dbReference>
<dbReference type="RefSeq" id="NP_001081179.1">
    <property type="nucleotide sequence ID" value="NM_001087710.1"/>
</dbReference>
<dbReference type="SMR" id="Q05935"/>
<dbReference type="GeneID" id="397697"/>
<dbReference type="KEGG" id="xla:397697"/>
<dbReference type="AGR" id="Xenbase:XB-GENE-986561"/>
<dbReference type="CTD" id="397697"/>
<dbReference type="Xenbase" id="XB-GENE-986561">
    <property type="gene designation" value="mybl1.L"/>
</dbReference>
<dbReference type="OrthoDB" id="2143914at2759"/>
<dbReference type="Proteomes" id="UP000186698">
    <property type="component" value="Chromosome 6L"/>
</dbReference>
<dbReference type="Bgee" id="397697">
    <property type="expression patterns" value="Expressed in testis and 13 other cell types or tissues"/>
</dbReference>
<dbReference type="GO" id="GO:0005634">
    <property type="term" value="C:nucleus"/>
    <property type="evidence" value="ECO:0000250"/>
    <property type="project" value="UniProtKB"/>
</dbReference>
<dbReference type="GO" id="GO:0000981">
    <property type="term" value="F:DNA-binding transcription factor activity, RNA polymerase II-specific"/>
    <property type="evidence" value="ECO:0000250"/>
    <property type="project" value="UniProtKB"/>
</dbReference>
<dbReference type="GO" id="GO:0000978">
    <property type="term" value="F:RNA polymerase II cis-regulatory region sequence-specific DNA binding"/>
    <property type="evidence" value="ECO:0000318"/>
    <property type="project" value="GO_Central"/>
</dbReference>
<dbReference type="GO" id="GO:0030154">
    <property type="term" value="P:cell differentiation"/>
    <property type="evidence" value="ECO:0007669"/>
    <property type="project" value="UniProtKB-KW"/>
</dbReference>
<dbReference type="GO" id="GO:0007141">
    <property type="term" value="P:male meiosis I"/>
    <property type="evidence" value="ECO:0000250"/>
    <property type="project" value="UniProtKB"/>
</dbReference>
<dbReference type="GO" id="GO:0000278">
    <property type="term" value="P:mitotic cell cycle"/>
    <property type="evidence" value="ECO:0000318"/>
    <property type="project" value="GO_Central"/>
</dbReference>
<dbReference type="GO" id="GO:0140543">
    <property type="term" value="P:positive regulation of piRNA transcription"/>
    <property type="evidence" value="ECO:0000250"/>
    <property type="project" value="UniProtKB"/>
</dbReference>
<dbReference type="GO" id="GO:0045944">
    <property type="term" value="P:positive regulation of transcription by RNA polymerase II"/>
    <property type="evidence" value="ECO:0000250"/>
    <property type="project" value="UniProtKB"/>
</dbReference>
<dbReference type="GO" id="GO:0007283">
    <property type="term" value="P:spermatogenesis"/>
    <property type="evidence" value="ECO:0000250"/>
    <property type="project" value="UniProtKB"/>
</dbReference>
<dbReference type="CDD" id="cd00167">
    <property type="entry name" value="SANT"/>
    <property type="match status" value="3"/>
</dbReference>
<dbReference type="FunFam" id="1.10.10.60:FF:000010">
    <property type="entry name" value="Transcriptional activator Myb isoform A"/>
    <property type="match status" value="1"/>
</dbReference>
<dbReference type="FunFam" id="1.10.10.60:FF:000016">
    <property type="entry name" value="Transcriptional activator Myb isoform A"/>
    <property type="match status" value="1"/>
</dbReference>
<dbReference type="FunFam" id="1.10.10.60:FF:000042">
    <property type="entry name" value="Transcriptional activator Myb isoform A"/>
    <property type="match status" value="1"/>
</dbReference>
<dbReference type="Gene3D" id="1.10.10.60">
    <property type="entry name" value="Homeodomain-like"/>
    <property type="match status" value="3"/>
</dbReference>
<dbReference type="InterPro" id="IPR015395">
    <property type="entry name" value="C-myb_C"/>
</dbReference>
<dbReference type="InterPro" id="IPR009057">
    <property type="entry name" value="Homeodomain-like_sf"/>
</dbReference>
<dbReference type="InterPro" id="IPR017930">
    <property type="entry name" value="Myb_dom"/>
</dbReference>
<dbReference type="InterPro" id="IPR050560">
    <property type="entry name" value="MYB_TF"/>
</dbReference>
<dbReference type="InterPro" id="IPR001005">
    <property type="entry name" value="SANT/Myb"/>
</dbReference>
<dbReference type="InterPro" id="IPR012642">
    <property type="entry name" value="Tscrpt_reg_Wos2-domain"/>
</dbReference>
<dbReference type="PANTHER" id="PTHR45614:SF25">
    <property type="entry name" value="MYB PROTEIN"/>
    <property type="match status" value="1"/>
</dbReference>
<dbReference type="PANTHER" id="PTHR45614">
    <property type="entry name" value="MYB PROTEIN-RELATED"/>
    <property type="match status" value="1"/>
</dbReference>
<dbReference type="Pfam" id="PF09316">
    <property type="entry name" value="Cmyb_C"/>
    <property type="match status" value="1"/>
</dbReference>
<dbReference type="Pfam" id="PF07988">
    <property type="entry name" value="LMSTEN"/>
    <property type="match status" value="1"/>
</dbReference>
<dbReference type="Pfam" id="PF13921">
    <property type="entry name" value="Myb_DNA-bind_6"/>
    <property type="match status" value="1"/>
</dbReference>
<dbReference type="Pfam" id="PF00249">
    <property type="entry name" value="Myb_DNA-binding"/>
    <property type="match status" value="1"/>
</dbReference>
<dbReference type="SMART" id="SM00717">
    <property type="entry name" value="SANT"/>
    <property type="match status" value="3"/>
</dbReference>
<dbReference type="SUPFAM" id="SSF46689">
    <property type="entry name" value="Homeodomain-like"/>
    <property type="match status" value="2"/>
</dbReference>
<dbReference type="PROSITE" id="PS51294">
    <property type="entry name" value="HTH_MYB"/>
    <property type="match status" value="3"/>
</dbReference>
<comment type="function">
    <text evidence="3">Transcription factor that specifically recognizes the sequence 5'-YAAC[GT]G-3'. Acts as a master regulator of male meiosis by promoting expression of piRNAs. The piRNA metabolic process mediates the repression of transposable elements during meiosis by forming complexes composed of piRNAs and Piwi proteins and governs the methylation and subsequent repression of transposons, which is essential for the germline integrity.</text>
</comment>
<comment type="subunit">
    <text evidence="2">Component of the DREAM complex.</text>
</comment>
<comment type="subcellular location">
    <subcellularLocation>
        <location evidence="3">Nucleus</location>
    </subcellularLocation>
</comment>
<comment type="developmental stage">
    <text evidence="6">Expressed during early spermatogenesis.</text>
</comment>
<organism>
    <name type="scientific">Xenopus laevis</name>
    <name type="common">African clawed frog</name>
    <dbReference type="NCBI Taxonomy" id="8355"/>
    <lineage>
        <taxon>Eukaryota</taxon>
        <taxon>Metazoa</taxon>
        <taxon>Chordata</taxon>
        <taxon>Craniata</taxon>
        <taxon>Vertebrata</taxon>
        <taxon>Euteleostomi</taxon>
        <taxon>Amphibia</taxon>
        <taxon>Batrachia</taxon>
        <taxon>Anura</taxon>
        <taxon>Pipoidea</taxon>
        <taxon>Pipidae</taxon>
        <taxon>Xenopodinae</taxon>
        <taxon>Xenopus</taxon>
        <taxon>Xenopus</taxon>
    </lineage>
</organism>
<evidence type="ECO:0000250" key="1"/>
<evidence type="ECO:0000250" key="2">
    <source>
        <dbReference type="UniProtKB" id="P10243"/>
    </source>
</evidence>
<evidence type="ECO:0000250" key="3">
    <source>
        <dbReference type="UniProtKB" id="P51960"/>
    </source>
</evidence>
<evidence type="ECO:0000255" key="4">
    <source>
        <dbReference type="PROSITE-ProRule" id="PRU00625"/>
    </source>
</evidence>
<evidence type="ECO:0000256" key="5">
    <source>
        <dbReference type="SAM" id="MobiDB-lite"/>
    </source>
</evidence>
<evidence type="ECO:0000269" key="6">
    <source>
    </source>
</evidence>
<reference key="1">
    <citation type="journal article" date="1993" name="Oncogene">
        <title>Xenopus A-myb is expressed during early spermatogenesis.</title>
        <authorList>
            <person name="Sleeman J.P."/>
        </authorList>
    </citation>
    <scope>NUCLEOTIDE SEQUENCE [MRNA]</scope>
</reference>
<reference key="2">
    <citation type="journal article" date="1992" name="Mech. Dev.">
        <title>Molecular cloning, expression and in vitro functional characterization of Myb-related proteins in Xenopus.</title>
        <authorList>
            <person name="Bouwmeester T."/>
            <person name="Guehmann S."/>
            <person name="El-Baradi T."/>
            <person name="Kalkbrenner F."/>
            <person name="van Wijk I."/>
            <person name="Moelling K."/>
            <person name="Pieler T."/>
        </authorList>
    </citation>
    <scope>NUCLEOTIDE SEQUENCE [MRNA] OF 1-181</scope>
    <scope>DEVELOPMENTAL STAGE</scope>
</reference>
<gene>
    <name type="primary">mybl1</name>
    <name type="synonym">amyb</name>
    <name type="synonym">myb2</name>
</gene>